<reference key="1">
    <citation type="journal article" date="2008" name="Genome Biol.">
        <title>Encapsulated in silica: genome, proteome and physiology of the thermophilic bacterium Anoxybacillus flavithermus WK1.</title>
        <authorList>
            <person name="Saw J.H."/>
            <person name="Mountain B.W."/>
            <person name="Feng L."/>
            <person name="Omelchenko M.V."/>
            <person name="Hou S."/>
            <person name="Saito J.A."/>
            <person name="Stott M.B."/>
            <person name="Li D."/>
            <person name="Zhao G."/>
            <person name="Wu J."/>
            <person name="Galperin M.Y."/>
            <person name="Koonin E.V."/>
            <person name="Makarova K.S."/>
            <person name="Wolf Y.I."/>
            <person name="Rigden D.J."/>
            <person name="Dunfield P.F."/>
            <person name="Wang L."/>
            <person name="Alam M."/>
        </authorList>
    </citation>
    <scope>NUCLEOTIDE SEQUENCE [LARGE SCALE GENOMIC DNA]</scope>
    <source>
        <strain>DSM 21510 / WK1</strain>
    </source>
</reference>
<dbReference type="EC" id="1.4.4.2" evidence="1"/>
<dbReference type="EMBL" id="CP000922">
    <property type="protein sequence ID" value="ACJ33294.1"/>
    <property type="molecule type" value="Genomic_DNA"/>
</dbReference>
<dbReference type="RefSeq" id="WP_012574577.1">
    <property type="nucleotide sequence ID" value="NC_011567.1"/>
</dbReference>
<dbReference type="SMR" id="B7GHD3"/>
<dbReference type="STRING" id="491915.Aflv_0916"/>
<dbReference type="GeneID" id="7037174"/>
<dbReference type="KEGG" id="afl:Aflv_0916"/>
<dbReference type="PATRIC" id="fig|491915.6.peg.936"/>
<dbReference type="eggNOG" id="COG0403">
    <property type="taxonomic scope" value="Bacteria"/>
</dbReference>
<dbReference type="HOGENOM" id="CLU_004620_0_2_9"/>
<dbReference type="Proteomes" id="UP000000742">
    <property type="component" value="Chromosome"/>
</dbReference>
<dbReference type="GO" id="GO:0004375">
    <property type="term" value="F:glycine dehydrogenase (decarboxylating) activity"/>
    <property type="evidence" value="ECO:0007669"/>
    <property type="project" value="UniProtKB-EC"/>
</dbReference>
<dbReference type="GO" id="GO:0019464">
    <property type="term" value="P:glycine decarboxylation via glycine cleavage system"/>
    <property type="evidence" value="ECO:0007669"/>
    <property type="project" value="UniProtKB-UniRule"/>
</dbReference>
<dbReference type="GO" id="GO:0009116">
    <property type="term" value="P:nucleoside metabolic process"/>
    <property type="evidence" value="ECO:0007669"/>
    <property type="project" value="InterPro"/>
</dbReference>
<dbReference type="CDD" id="cd00613">
    <property type="entry name" value="GDC-P"/>
    <property type="match status" value="1"/>
</dbReference>
<dbReference type="FunFam" id="3.40.640.10:FF:000113">
    <property type="entry name" value="Probable glycine dehydrogenase (decarboxylating) subunit 1"/>
    <property type="match status" value="1"/>
</dbReference>
<dbReference type="Gene3D" id="3.90.1150.10">
    <property type="entry name" value="Aspartate Aminotransferase, domain 1"/>
    <property type="match status" value="1"/>
</dbReference>
<dbReference type="Gene3D" id="3.40.640.10">
    <property type="entry name" value="Type I PLP-dependent aspartate aminotransferase-like (Major domain)"/>
    <property type="match status" value="1"/>
</dbReference>
<dbReference type="HAMAP" id="MF_00712">
    <property type="entry name" value="GcvPA"/>
    <property type="match status" value="1"/>
</dbReference>
<dbReference type="InterPro" id="IPR023010">
    <property type="entry name" value="GcvPA"/>
</dbReference>
<dbReference type="InterPro" id="IPR049315">
    <property type="entry name" value="GDC-P_N"/>
</dbReference>
<dbReference type="InterPro" id="IPR020581">
    <property type="entry name" value="GDC_P"/>
</dbReference>
<dbReference type="InterPro" id="IPR015424">
    <property type="entry name" value="PyrdxlP-dep_Trfase"/>
</dbReference>
<dbReference type="InterPro" id="IPR015421">
    <property type="entry name" value="PyrdxlP-dep_Trfase_major"/>
</dbReference>
<dbReference type="InterPro" id="IPR015422">
    <property type="entry name" value="PyrdxlP-dep_Trfase_small"/>
</dbReference>
<dbReference type="NCBIfam" id="NF001696">
    <property type="entry name" value="PRK00451.1"/>
    <property type="match status" value="1"/>
</dbReference>
<dbReference type="PANTHER" id="PTHR42806">
    <property type="entry name" value="GLYCINE CLEAVAGE SYSTEM P-PROTEIN"/>
    <property type="match status" value="1"/>
</dbReference>
<dbReference type="PANTHER" id="PTHR42806:SF1">
    <property type="entry name" value="GLYCINE DEHYDROGENASE (DECARBOXYLATING)"/>
    <property type="match status" value="1"/>
</dbReference>
<dbReference type="Pfam" id="PF02347">
    <property type="entry name" value="GDC-P"/>
    <property type="match status" value="1"/>
</dbReference>
<dbReference type="PIRSF" id="PIRSF006815">
    <property type="entry name" value="GcvPA"/>
    <property type="match status" value="1"/>
</dbReference>
<dbReference type="SUPFAM" id="SSF53383">
    <property type="entry name" value="PLP-dependent transferases"/>
    <property type="match status" value="1"/>
</dbReference>
<sequence length="448" mass="49402">MLHRYLPMTEEDKQQMLQTIGVQSIDELFSDIPESVRFQGEYNIKPAKSEPELMKELMALAAKNADMKTHTSFLGAGVYDHYIPTIVDHVISRSEFYTAYTPYQPEISQGELQAIFEFQTMICELTGMDVANSSMYDGGTALAEAALLSAAHTKKKKVLLSNAVHPEYRDVVKTYAKGPGLEVVEIPYKNGVTDLAALQAEMNEDVACVIVQYPNFFGQIEPLKDIEPIAHAHKGMFVVASNPLALGVLTPPGQFGADIVVGDAQPFGIPAQFGGPHCGYFAVKSALMRKIPGRLVGQTTDEEGRRGFVLTLQAREQHIRRDKATSNICSNQALNALAASVAMTALGKNGVKEMATMNIQKAHYAKEAFVSRGFHVVFEGPFFNEFVIRMNKPIAEVNKKLLEKGIIGGYDLGRNYPELQNCMLIAVTELRTKEEIDTLVKELGDYNA</sequence>
<comment type="function">
    <text evidence="1">The glycine cleavage system catalyzes the degradation of glycine. The P protein binds the alpha-amino group of glycine through its pyridoxal phosphate cofactor; CO(2) is released and the remaining methylamine moiety is then transferred to the lipoamide cofactor of the H protein.</text>
</comment>
<comment type="catalytic activity">
    <reaction evidence="1">
        <text>N(6)-[(R)-lipoyl]-L-lysyl-[glycine-cleavage complex H protein] + glycine + H(+) = N(6)-[(R)-S(8)-aminomethyldihydrolipoyl]-L-lysyl-[glycine-cleavage complex H protein] + CO2</text>
        <dbReference type="Rhea" id="RHEA:24304"/>
        <dbReference type="Rhea" id="RHEA-COMP:10494"/>
        <dbReference type="Rhea" id="RHEA-COMP:10495"/>
        <dbReference type="ChEBI" id="CHEBI:15378"/>
        <dbReference type="ChEBI" id="CHEBI:16526"/>
        <dbReference type="ChEBI" id="CHEBI:57305"/>
        <dbReference type="ChEBI" id="CHEBI:83099"/>
        <dbReference type="ChEBI" id="CHEBI:83143"/>
        <dbReference type="EC" id="1.4.4.2"/>
    </reaction>
</comment>
<comment type="subunit">
    <text evidence="1">The glycine cleavage system is composed of four proteins: P, T, L and H. In this organism, the P 'protein' is a heterodimer of two subunits.</text>
</comment>
<comment type="similarity">
    <text evidence="1">Belongs to the GcvP family. N-terminal subunit subfamily.</text>
</comment>
<protein>
    <recommendedName>
        <fullName evidence="1">Probable glycine dehydrogenase (decarboxylating) subunit 1</fullName>
        <ecNumber evidence="1">1.4.4.2</ecNumber>
    </recommendedName>
    <alternativeName>
        <fullName evidence="1">Glycine cleavage system P-protein subunit 1</fullName>
    </alternativeName>
    <alternativeName>
        <fullName evidence="1">Glycine decarboxylase subunit 1</fullName>
    </alternativeName>
    <alternativeName>
        <fullName evidence="1">Glycine dehydrogenase (aminomethyl-transferring) subunit 1</fullName>
    </alternativeName>
</protein>
<evidence type="ECO:0000255" key="1">
    <source>
        <dbReference type="HAMAP-Rule" id="MF_00712"/>
    </source>
</evidence>
<keyword id="KW-0560">Oxidoreductase</keyword>
<feature type="chain" id="PRO_1000132466" description="Probable glycine dehydrogenase (decarboxylating) subunit 1">
    <location>
        <begin position="1"/>
        <end position="448"/>
    </location>
</feature>
<gene>
    <name evidence="1" type="primary">gcvPA</name>
    <name type="ordered locus">Aflv_0916</name>
</gene>
<name>GCSPA_ANOFW</name>
<organism>
    <name type="scientific">Anoxybacillus flavithermus (strain DSM 21510 / WK1)</name>
    <dbReference type="NCBI Taxonomy" id="491915"/>
    <lineage>
        <taxon>Bacteria</taxon>
        <taxon>Bacillati</taxon>
        <taxon>Bacillota</taxon>
        <taxon>Bacilli</taxon>
        <taxon>Bacillales</taxon>
        <taxon>Anoxybacillaceae</taxon>
        <taxon>Anoxybacillus</taxon>
    </lineage>
</organism>
<accession>B7GHD3</accession>
<proteinExistence type="inferred from homology"/>